<sequence>MAKVPDLFEDLKNCFSENEEYSSAIDHLSLNQKSFYDASYEPLHEDCMNKVVSLSTSETSVSPNLTFQENVVAVTASGKILKKRRLSLNQPITDVDLETNVSDPEEGIIKPRSVPYTFQRNMRYKYLRIIKQEFTLNDALNQSLVRDTSDQYLRAAPLQNLGDAVKFDMGVYMTSEDSILPVTLRISQTPLFVSAQNEDEPVLLKEMPETPRIITDSESDILFFWETQGNKNYFKSAANPQLFIATKPEHLVHMARGLPSMTDFQIS</sequence>
<name>IL1A_RABIT</name>
<feature type="propeptide" id="PRO_0000015277">
    <location>
        <begin position="1"/>
        <end position="112"/>
    </location>
</feature>
<feature type="chain" id="PRO_0000015278" description="Interleukin-1 alpha">
    <location>
        <begin position="113"/>
        <end position="267"/>
    </location>
</feature>
<feature type="region of interest" description="Nuclear localization signal (NLS)" evidence="2">
    <location>
        <begin position="82"/>
        <end position="86"/>
    </location>
</feature>
<feature type="modified residue" description="N6-acetyllysine" evidence="2">
    <location>
        <position position="82"/>
    </location>
</feature>
<feature type="modified residue" description="Phosphoserine" evidence="1">
    <location>
        <position position="87"/>
    </location>
</feature>
<feature type="glycosylation site" description="N-linked (GlcNAc...) asparagine" evidence="3">
    <location>
        <position position="64"/>
    </location>
</feature>
<feature type="glycosylation site" description="N-linked (GlcNAc...) asparagine" evidence="3">
    <location>
        <position position="100"/>
    </location>
</feature>
<feature type="glycosylation site" description="N-linked (GlcNAc...) asparagine" evidence="3">
    <location>
        <position position="141"/>
    </location>
</feature>
<evidence type="ECO:0000250" key="1">
    <source>
        <dbReference type="UniProtKB" id="P01582"/>
    </source>
</evidence>
<evidence type="ECO:0000250" key="2">
    <source>
        <dbReference type="UniProtKB" id="P01583"/>
    </source>
</evidence>
<evidence type="ECO:0000255" key="3"/>
<evidence type="ECO:0000305" key="4"/>
<protein>
    <recommendedName>
        <fullName>Interleukin-1 alpha</fullName>
        <shortName>IL-1 alpha</shortName>
    </recommendedName>
</protein>
<accession>P04822</accession>
<organism>
    <name type="scientific">Oryctolagus cuniculus</name>
    <name type="common">Rabbit</name>
    <dbReference type="NCBI Taxonomy" id="9986"/>
    <lineage>
        <taxon>Eukaryota</taxon>
        <taxon>Metazoa</taxon>
        <taxon>Chordata</taxon>
        <taxon>Craniata</taxon>
        <taxon>Vertebrata</taxon>
        <taxon>Euteleostomi</taxon>
        <taxon>Mammalia</taxon>
        <taxon>Eutheria</taxon>
        <taxon>Euarchontoglires</taxon>
        <taxon>Glires</taxon>
        <taxon>Lagomorpha</taxon>
        <taxon>Leporidae</taxon>
        <taxon>Oryctolagus</taxon>
    </lineage>
</organism>
<keyword id="KW-0007">Acetylation</keyword>
<keyword id="KW-0202">Cytokine</keyword>
<keyword id="KW-0963">Cytoplasm</keyword>
<keyword id="KW-0325">Glycoprotein</keyword>
<keyword id="KW-0395">Inflammatory response</keyword>
<keyword id="KW-0497">Mitogen</keyword>
<keyword id="KW-0539">Nucleus</keyword>
<keyword id="KW-0597">Phosphoprotein</keyword>
<keyword id="KW-0666">Pyrogen</keyword>
<keyword id="KW-1185">Reference proteome</keyword>
<keyword id="KW-0964">Secreted</keyword>
<proteinExistence type="evidence at transcript level"/>
<gene>
    <name type="primary">IL1A</name>
</gene>
<comment type="function">
    <text evidence="2">Cytokine constitutively present intracellularly in nearly all resting non-hematopoietic cells that plays an important role in inflammation and bridges the innate and adaptive immune systems. After binding to its receptor IL1R1 together with its accessory protein IL1RAP, forms the high affinity interleukin-1 receptor complex. Signaling involves the recruitment of adapter molecules such as MYD88, IRAK1 or IRAK4. In turn, mediates the activation of NF-kappa-B and the three MAPK pathways p38, p42/p44 and JNK pathways. Within the cell, acts as an alarmin and cell death results in its liberation in the extracellular space after disruption of the cell membrane to induce inflammation and alert the host to injury or damage. In addition to its role as a danger signal, which occurs when the cytokine is passively released by cell necrosis, directly senses DNA damage and acts as signal for genotoxic stress without loss of cell integrity.</text>
</comment>
<comment type="subunit">
    <text evidence="2">Monomer. Interacts with TMED10; the interaction mediates the translocation from the cytoplasm into the ERGIC (endoplasmic reticulum-Golgi intermediate compartment) and thereby secretion. Interacts with IL1R1. Interacts with S100A13; this interaction is the first step in the export of IL1A, followed by direct translocation of this complex across the plasma membrane.</text>
</comment>
<comment type="subcellular location">
    <subcellularLocation>
        <location evidence="2">Nucleus</location>
    </subcellularLocation>
    <subcellularLocation>
        <location evidence="2">Cytoplasm</location>
    </subcellularLocation>
    <subcellularLocation>
        <location evidence="2">Secreted</location>
    </subcellularLocation>
    <text evidence="2">The lack of a specific hydrophobic segment in the precursor sequence suggests that IL-1 is released by damaged cells or is secreted by a mechanism differing from that used for other secretory proteins. The secretion is dependent on protein unfolding and facilitated by the cargo receptor TMED10; it results in protein translocation from the cytoplasm into the ERGIC (endoplasmic reticulum-Golgi intermediate compartment) followed by vesicle entry and secretion. Recruited to DNA damage sites and secreted after genotoxic stress.</text>
</comment>
<comment type="domain">
    <text>The similarity among the IL-1 precursors suggests that the amino ends of these proteins serve some as yet undefined function.</text>
</comment>
<comment type="PTM">
    <text evidence="2">Acetylated within its nuclear localization sequence, which impacts subcellular localization.</text>
</comment>
<comment type="PTM">
    <text evidence="2">Proteolytic processed by CAPN1 in a calcium-dependent manner. Cleavage from 31 kDa precursor to 18 kDa biologically active molecules.</text>
</comment>
<comment type="PTM">
    <text evidence="2">Phosphorylated. Phosphorylation greatly enhances susceptibility to digestion and promotes the conversion of pre-IL1A alpha to the biologically active IL1A.</text>
</comment>
<comment type="similarity">
    <text evidence="4">Belongs to the IL-1 family.</text>
</comment>
<dbReference type="EMBL" id="X02852">
    <property type="protein sequence ID" value="CAA26605.1"/>
    <property type="molecule type" value="mRNA"/>
</dbReference>
<dbReference type="PIR" id="B24073">
    <property type="entry name" value="B24073"/>
</dbReference>
<dbReference type="RefSeq" id="NP_001095154.1">
    <property type="nucleotide sequence ID" value="NM_001101684.1"/>
</dbReference>
<dbReference type="RefSeq" id="XP_017205589.1">
    <property type="nucleotide sequence ID" value="XM_017350100.1"/>
</dbReference>
<dbReference type="SMR" id="P04822"/>
<dbReference type="FunCoup" id="P04822">
    <property type="interactions" value="49"/>
</dbReference>
<dbReference type="STRING" id="9986.ENSOCUP00000007573"/>
<dbReference type="GlyCosmos" id="P04822">
    <property type="glycosylation" value="3 sites, No reported glycans"/>
</dbReference>
<dbReference type="PaxDb" id="9986-ENSOCUP00000007573"/>
<dbReference type="Ensembl" id="ENSOCUT00000008771.4">
    <property type="protein sequence ID" value="ENSOCUP00000007573.2"/>
    <property type="gene ID" value="ENSOCUG00000008771.4"/>
</dbReference>
<dbReference type="GeneID" id="100009250"/>
<dbReference type="KEGG" id="ocu:100009250"/>
<dbReference type="CTD" id="3552"/>
<dbReference type="eggNOG" id="ENOG502T3DD">
    <property type="taxonomic scope" value="Eukaryota"/>
</dbReference>
<dbReference type="GeneTree" id="ENSGT00390000013353"/>
<dbReference type="HOGENOM" id="CLU_090014_0_0_1"/>
<dbReference type="InParanoid" id="P04822"/>
<dbReference type="OMA" id="SNMKYNF"/>
<dbReference type="OrthoDB" id="9451248at2759"/>
<dbReference type="TreeFam" id="TF300203"/>
<dbReference type="Proteomes" id="UP000001811">
    <property type="component" value="Chromosome 2"/>
</dbReference>
<dbReference type="Bgee" id="ENSOCUG00000008771">
    <property type="expression patterns" value="Expressed in testis and 5 other cell types or tissues"/>
</dbReference>
<dbReference type="GO" id="GO:0005829">
    <property type="term" value="C:cytosol"/>
    <property type="evidence" value="ECO:0000250"/>
    <property type="project" value="UniProtKB"/>
</dbReference>
<dbReference type="GO" id="GO:0005615">
    <property type="term" value="C:extracellular space"/>
    <property type="evidence" value="ECO:0000250"/>
    <property type="project" value="UniProtKB"/>
</dbReference>
<dbReference type="GO" id="GO:0005634">
    <property type="term" value="C:nucleus"/>
    <property type="evidence" value="ECO:0007669"/>
    <property type="project" value="UniProtKB-SubCell"/>
</dbReference>
<dbReference type="GO" id="GO:0005507">
    <property type="term" value="F:copper ion binding"/>
    <property type="evidence" value="ECO:0000250"/>
    <property type="project" value="UniProtKB"/>
</dbReference>
<dbReference type="GO" id="GO:0005125">
    <property type="term" value="F:cytokine activity"/>
    <property type="evidence" value="ECO:0007669"/>
    <property type="project" value="UniProtKB-KW"/>
</dbReference>
<dbReference type="GO" id="GO:0005149">
    <property type="term" value="F:interleukin-1 receptor binding"/>
    <property type="evidence" value="ECO:0007669"/>
    <property type="project" value="InterPro"/>
</dbReference>
<dbReference type="GO" id="GO:0034605">
    <property type="term" value="P:cellular response to heat"/>
    <property type="evidence" value="ECO:0000250"/>
    <property type="project" value="UniProtKB"/>
</dbReference>
<dbReference type="GO" id="GO:0071222">
    <property type="term" value="P:cellular response to lipopolysaccharide"/>
    <property type="evidence" value="ECO:0007669"/>
    <property type="project" value="TreeGrafter"/>
</dbReference>
<dbReference type="GO" id="GO:0002248">
    <property type="term" value="P:connective tissue replacement involved in inflammatory response wound healing"/>
    <property type="evidence" value="ECO:0007669"/>
    <property type="project" value="Ensembl"/>
</dbReference>
<dbReference type="GO" id="GO:0019221">
    <property type="term" value="P:cytokine-mediated signaling pathway"/>
    <property type="evidence" value="ECO:0007669"/>
    <property type="project" value="Ensembl"/>
</dbReference>
<dbReference type="GO" id="GO:0035234">
    <property type="term" value="P:ectopic germ cell programmed cell death"/>
    <property type="evidence" value="ECO:0007669"/>
    <property type="project" value="Ensembl"/>
</dbReference>
<dbReference type="GO" id="GO:0097192">
    <property type="term" value="P:extrinsic apoptotic signaling pathway in absence of ligand"/>
    <property type="evidence" value="ECO:0007669"/>
    <property type="project" value="Ensembl"/>
</dbReference>
<dbReference type="GO" id="GO:0001660">
    <property type="term" value="P:fever generation"/>
    <property type="evidence" value="ECO:0007669"/>
    <property type="project" value="UniProtKB-KW"/>
</dbReference>
<dbReference type="GO" id="GO:0006955">
    <property type="term" value="P:immune response"/>
    <property type="evidence" value="ECO:0007669"/>
    <property type="project" value="InterPro"/>
</dbReference>
<dbReference type="GO" id="GO:0006883">
    <property type="term" value="P:intracellular sodium ion homeostasis"/>
    <property type="evidence" value="ECO:0007669"/>
    <property type="project" value="Ensembl"/>
</dbReference>
<dbReference type="GO" id="GO:0008285">
    <property type="term" value="P:negative regulation of cell population proliferation"/>
    <property type="evidence" value="ECO:0007669"/>
    <property type="project" value="Ensembl"/>
</dbReference>
<dbReference type="GO" id="GO:0045766">
    <property type="term" value="P:positive regulation of angiogenesis"/>
    <property type="evidence" value="ECO:0007669"/>
    <property type="project" value="Ensembl"/>
</dbReference>
<dbReference type="GO" id="GO:0051781">
    <property type="term" value="P:positive regulation of cell division"/>
    <property type="evidence" value="ECO:0007669"/>
    <property type="project" value="UniProtKB-KW"/>
</dbReference>
<dbReference type="GO" id="GO:0033092">
    <property type="term" value="P:positive regulation of immature T cell proliferation in thymus"/>
    <property type="evidence" value="ECO:0007669"/>
    <property type="project" value="TreeGrafter"/>
</dbReference>
<dbReference type="GO" id="GO:0032743">
    <property type="term" value="P:positive regulation of interleukin-2 production"/>
    <property type="evidence" value="ECO:0007669"/>
    <property type="project" value="Ensembl"/>
</dbReference>
<dbReference type="GO" id="GO:0045840">
    <property type="term" value="P:positive regulation of mitotic nuclear division"/>
    <property type="evidence" value="ECO:0007669"/>
    <property type="project" value="Ensembl"/>
</dbReference>
<dbReference type="GO" id="GO:0050714">
    <property type="term" value="P:positive regulation of protein secretion"/>
    <property type="evidence" value="ECO:0007669"/>
    <property type="project" value="Ensembl"/>
</dbReference>
<dbReference type="GO" id="GO:0045944">
    <property type="term" value="P:positive regulation of transcription by RNA polymerase II"/>
    <property type="evidence" value="ECO:0007669"/>
    <property type="project" value="Ensembl"/>
</dbReference>
<dbReference type="GO" id="GO:0010575">
    <property type="term" value="P:positive regulation of vascular endothelial growth factor production"/>
    <property type="evidence" value="ECO:0007669"/>
    <property type="project" value="Ensembl"/>
</dbReference>
<dbReference type="GO" id="GO:0046688">
    <property type="term" value="P:response to copper ion"/>
    <property type="evidence" value="ECO:0000250"/>
    <property type="project" value="UniProtKB"/>
</dbReference>
<dbReference type="CDD" id="cd23295">
    <property type="entry name" value="beta-trefoil_IL1A"/>
    <property type="match status" value="1"/>
</dbReference>
<dbReference type="FunFam" id="2.80.10.50:FF:000049">
    <property type="entry name" value="Interleukin-1 alpha"/>
    <property type="match status" value="1"/>
</dbReference>
<dbReference type="Gene3D" id="2.80.10.50">
    <property type="match status" value="1"/>
</dbReference>
<dbReference type="InterPro" id="IPR003295">
    <property type="entry name" value="IL-1_alpha"/>
</dbReference>
<dbReference type="InterPro" id="IPR020877">
    <property type="entry name" value="IL-1_CS"/>
</dbReference>
<dbReference type="InterPro" id="IPR000975">
    <property type="entry name" value="IL-1_fam"/>
</dbReference>
<dbReference type="InterPro" id="IPR003502">
    <property type="entry name" value="IL-1_propep"/>
</dbReference>
<dbReference type="InterPro" id="IPR008996">
    <property type="entry name" value="IL1/FGF"/>
</dbReference>
<dbReference type="PANTHER" id="PTHR10078:SF33">
    <property type="entry name" value="INTERLEUKIN-1 ALPHA"/>
    <property type="match status" value="1"/>
</dbReference>
<dbReference type="PANTHER" id="PTHR10078">
    <property type="entry name" value="INTERLEUKIN-1 FAMILY MEMBER"/>
    <property type="match status" value="1"/>
</dbReference>
<dbReference type="Pfam" id="PF00340">
    <property type="entry name" value="IL1"/>
    <property type="match status" value="1"/>
</dbReference>
<dbReference type="Pfam" id="PF02394">
    <property type="entry name" value="IL1_propep"/>
    <property type="match status" value="1"/>
</dbReference>
<dbReference type="PRINTS" id="PR00264">
    <property type="entry name" value="INTERLEUKIN1"/>
</dbReference>
<dbReference type="PRINTS" id="PR01358">
    <property type="entry name" value="INTRLEUKIN1A"/>
</dbReference>
<dbReference type="PRINTS" id="PR01357">
    <property type="entry name" value="INTRLEUKN1AB"/>
</dbReference>
<dbReference type="SMART" id="SM00125">
    <property type="entry name" value="IL1"/>
    <property type="match status" value="1"/>
</dbReference>
<dbReference type="SUPFAM" id="SSF50353">
    <property type="entry name" value="Cytokine"/>
    <property type="match status" value="1"/>
</dbReference>
<dbReference type="PROSITE" id="PS00253">
    <property type="entry name" value="INTERLEUKIN_1"/>
    <property type="match status" value="1"/>
</dbReference>
<reference key="1">
    <citation type="journal article" date="1985" name="Nucleic Acids Res.">
        <title>Cloning and characterization of the cDNAs for human and rabbit interleukin-1 precursor.</title>
        <authorList>
            <person name="Furutani Y."/>
            <person name="Notake M."/>
            <person name="Yamayoshi M."/>
            <person name="Yamagishi J."/>
            <person name="Nomura H."/>
            <person name="Ohue M."/>
            <person name="Furuta R."/>
            <person name="Fukui T."/>
            <person name="Yamada M."/>
            <person name="Nakamura S."/>
        </authorList>
    </citation>
    <scope>NUCLEOTIDE SEQUENCE [MRNA]</scope>
</reference>